<evidence type="ECO:0000250" key="1"/>
<evidence type="ECO:0000250" key="2">
    <source>
        <dbReference type="UniProtKB" id="O22317"/>
    </source>
</evidence>
<evidence type="ECO:0000255" key="3"/>
<evidence type="ECO:0000256" key="4">
    <source>
        <dbReference type="SAM" id="MobiDB-lite"/>
    </source>
</evidence>
<evidence type="ECO:0000305" key="5"/>
<accession>Q4WG16</accession>
<comment type="function">
    <text evidence="1">Glucanases play a role in cell expansion during growth, in cell-cell fusion during mating, and in spore release during sporulation. This enzyme may be involved in beta-glucan degradation and also function biosynthetically as a transglycosylase (By similarity).</text>
</comment>
<comment type="catalytic activity">
    <reaction>
        <text>Hydrolysis of (1-&gt;3)-beta-D-glucosidic linkages in (1-&gt;3)-beta-D-glucans.</text>
        <dbReference type="EC" id="3.2.1.39"/>
    </reaction>
</comment>
<comment type="subcellular location">
    <subcellularLocation>
        <location evidence="1">Cell membrane</location>
        <topology evidence="1">Lipid-anchor</topology>
        <topology evidence="1">GPI-anchor</topology>
    </subcellularLocation>
    <subcellularLocation>
        <location evidence="1">Secreted</location>
        <location evidence="1">Cell wall</location>
    </subcellularLocation>
    <text evidence="1">Covalently-linked GPI-modified cell wall protein.</text>
</comment>
<comment type="PTM">
    <text evidence="1">The GPI-anchor is attached to the protein in the endoplasmic reticulum and serves to target the protein to the cell surface. There, the glucosamine-inositol phospholipid moiety is cleaved off and the GPI-modified mannoprotein is covalently attached via its lipidless GPI glycan remnant to the 1,6-beta-glucan of the outer cell wall layer (By similarity).</text>
</comment>
<comment type="similarity">
    <text evidence="5">Belongs to the glycosyl hydrolase 17 family.</text>
</comment>
<reference key="1">
    <citation type="journal article" date="2005" name="Nature">
        <title>Genomic sequence of the pathogenic and allergenic filamentous fungus Aspergillus fumigatus.</title>
        <authorList>
            <person name="Nierman W.C."/>
            <person name="Pain A."/>
            <person name="Anderson M.J."/>
            <person name="Wortman J.R."/>
            <person name="Kim H.S."/>
            <person name="Arroyo J."/>
            <person name="Berriman M."/>
            <person name="Abe K."/>
            <person name="Archer D.B."/>
            <person name="Bermejo C."/>
            <person name="Bennett J.W."/>
            <person name="Bowyer P."/>
            <person name="Chen D."/>
            <person name="Collins M."/>
            <person name="Coulsen R."/>
            <person name="Davies R."/>
            <person name="Dyer P.S."/>
            <person name="Farman M.L."/>
            <person name="Fedorova N."/>
            <person name="Fedorova N.D."/>
            <person name="Feldblyum T.V."/>
            <person name="Fischer R."/>
            <person name="Fosker N."/>
            <person name="Fraser A."/>
            <person name="Garcia J.L."/>
            <person name="Garcia M.J."/>
            <person name="Goble A."/>
            <person name="Goldman G.H."/>
            <person name="Gomi K."/>
            <person name="Griffith-Jones S."/>
            <person name="Gwilliam R."/>
            <person name="Haas B.J."/>
            <person name="Haas H."/>
            <person name="Harris D.E."/>
            <person name="Horiuchi H."/>
            <person name="Huang J."/>
            <person name="Humphray S."/>
            <person name="Jimenez J."/>
            <person name="Keller N."/>
            <person name="Khouri H."/>
            <person name="Kitamoto K."/>
            <person name="Kobayashi T."/>
            <person name="Konzack S."/>
            <person name="Kulkarni R."/>
            <person name="Kumagai T."/>
            <person name="Lafton A."/>
            <person name="Latge J.-P."/>
            <person name="Li W."/>
            <person name="Lord A."/>
            <person name="Lu C."/>
            <person name="Majoros W.H."/>
            <person name="May G.S."/>
            <person name="Miller B.L."/>
            <person name="Mohamoud Y."/>
            <person name="Molina M."/>
            <person name="Monod M."/>
            <person name="Mouyna I."/>
            <person name="Mulligan S."/>
            <person name="Murphy L.D."/>
            <person name="O'Neil S."/>
            <person name="Paulsen I."/>
            <person name="Penalva M.A."/>
            <person name="Pertea M."/>
            <person name="Price C."/>
            <person name="Pritchard B.L."/>
            <person name="Quail M.A."/>
            <person name="Rabbinowitsch E."/>
            <person name="Rawlins N."/>
            <person name="Rajandream M.A."/>
            <person name="Reichard U."/>
            <person name="Renauld H."/>
            <person name="Robson G.D."/>
            <person name="Rodriguez de Cordoba S."/>
            <person name="Rodriguez-Pena J.M."/>
            <person name="Ronning C.M."/>
            <person name="Rutter S."/>
            <person name="Salzberg S.L."/>
            <person name="Sanchez M."/>
            <person name="Sanchez-Ferrero J.C."/>
            <person name="Saunders D."/>
            <person name="Seeger K."/>
            <person name="Squares R."/>
            <person name="Squares S."/>
            <person name="Takeuchi M."/>
            <person name="Tekaia F."/>
            <person name="Turner G."/>
            <person name="Vazquez de Aldana C.R."/>
            <person name="Weidman J."/>
            <person name="White O."/>
            <person name="Woodward J.R."/>
            <person name="Yu J.-H."/>
            <person name="Fraser C.M."/>
            <person name="Galagan J.E."/>
            <person name="Asai K."/>
            <person name="Machida M."/>
            <person name="Hall N."/>
            <person name="Barrell B.G."/>
            <person name="Denning D.W."/>
        </authorList>
    </citation>
    <scope>NUCLEOTIDE SEQUENCE [LARGE SCALE GENOMIC DNA]</scope>
    <source>
        <strain>ATCC MYA-4609 / CBS 101355 / FGSC A1100 / Af293</strain>
    </source>
</reference>
<dbReference type="EC" id="3.2.1.39"/>
<dbReference type="EMBL" id="AAHF01000010">
    <property type="protein sequence ID" value="EAL86311.1"/>
    <property type="molecule type" value="Genomic_DNA"/>
</dbReference>
<dbReference type="RefSeq" id="XP_748349.1">
    <property type="nucleotide sequence ID" value="XM_743256.1"/>
</dbReference>
<dbReference type="SMR" id="Q4WG16"/>
<dbReference type="STRING" id="330879.Q4WG16"/>
<dbReference type="CAZy" id="GH17">
    <property type="family name" value="Glycoside Hydrolase Family 17"/>
</dbReference>
<dbReference type="GlyCosmos" id="Q4WG16">
    <property type="glycosylation" value="3 sites, No reported glycans"/>
</dbReference>
<dbReference type="EnsemblFungi" id="EAL86311">
    <property type="protein sequence ID" value="EAL86311"/>
    <property type="gene ID" value="AFUA_3G00270"/>
</dbReference>
<dbReference type="GeneID" id="3506119"/>
<dbReference type="KEGG" id="afm:AFUA_3G00270"/>
<dbReference type="VEuPathDB" id="FungiDB:Afu3g00270"/>
<dbReference type="eggNOG" id="ENOG502SI3D">
    <property type="taxonomic scope" value="Eukaryota"/>
</dbReference>
<dbReference type="HOGENOM" id="CLU_028820_0_2_1"/>
<dbReference type="InParanoid" id="Q4WG16"/>
<dbReference type="OMA" id="WDDVGCP"/>
<dbReference type="OrthoDB" id="77201at2759"/>
<dbReference type="Proteomes" id="UP000002530">
    <property type="component" value="Chromosome 3"/>
</dbReference>
<dbReference type="GO" id="GO:0009986">
    <property type="term" value="C:cell surface"/>
    <property type="evidence" value="ECO:0000318"/>
    <property type="project" value="GO_Central"/>
</dbReference>
<dbReference type="GO" id="GO:0005576">
    <property type="term" value="C:extracellular region"/>
    <property type="evidence" value="ECO:0000318"/>
    <property type="project" value="GO_Central"/>
</dbReference>
<dbReference type="GO" id="GO:0009277">
    <property type="term" value="C:fungal-type cell wall"/>
    <property type="evidence" value="ECO:0000318"/>
    <property type="project" value="GO_Central"/>
</dbReference>
<dbReference type="GO" id="GO:0005886">
    <property type="term" value="C:plasma membrane"/>
    <property type="evidence" value="ECO:0007669"/>
    <property type="project" value="UniProtKB-SubCell"/>
</dbReference>
<dbReference type="GO" id="GO:0098552">
    <property type="term" value="C:side of membrane"/>
    <property type="evidence" value="ECO:0007669"/>
    <property type="project" value="UniProtKB-KW"/>
</dbReference>
<dbReference type="GO" id="GO:0042973">
    <property type="term" value="F:glucan endo-1,3-beta-D-glucosidase activity"/>
    <property type="evidence" value="ECO:0000318"/>
    <property type="project" value="GO_Central"/>
</dbReference>
<dbReference type="GO" id="GO:0016757">
    <property type="term" value="F:glycosyltransferase activity"/>
    <property type="evidence" value="ECO:0000314"/>
    <property type="project" value="AspGD"/>
</dbReference>
<dbReference type="GO" id="GO:0016798">
    <property type="term" value="F:hydrolase activity, acting on glycosyl bonds"/>
    <property type="evidence" value="ECO:0000314"/>
    <property type="project" value="AspGD"/>
</dbReference>
<dbReference type="GO" id="GO:0005975">
    <property type="term" value="P:carbohydrate metabolic process"/>
    <property type="evidence" value="ECO:0000314"/>
    <property type="project" value="AspGD"/>
</dbReference>
<dbReference type="GO" id="GO:0071555">
    <property type="term" value="P:cell wall organization"/>
    <property type="evidence" value="ECO:0000318"/>
    <property type="project" value="GO_Central"/>
</dbReference>
<dbReference type="GO" id="GO:0000272">
    <property type="term" value="P:polysaccharide catabolic process"/>
    <property type="evidence" value="ECO:0007669"/>
    <property type="project" value="UniProtKB-KW"/>
</dbReference>
<dbReference type="FunFam" id="3.20.20.80:FF:000233">
    <property type="entry name" value="Probable glucan endo-1,3-beta-glucosidase eglC"/>
    <property type="match status" value="1"/>
</dbReference>
<dbReference type="Gene3D" id="3.20.20.80">
    <property type="entry name" value="Glycosidases"/>
    <property type="match status" value="1"/>
</dbReference>
<dbReference type="InterPro" id="IPR050732">
    <property type="entry name" value="Beta-glucan_modifiers"/>
</dbReference>
<dbReference type="InterPro" id="IPR000490">
    <property type="entry name" value="Glyco_hydro_17"/>
</dbReference>
<dbReference type="InterPro" id="IPR017853">
    <property type="entry name" value="Glycoside_hydrolase_SF"/>
</dbReference>
<dbReference type="PANTHER" id="PTHR16631">
    <property type="entry name" value="GLUCAN 1,3-BETA-GLUCOSIDASE"/>
    <property type="match status" value="1"/>
</dbReference>
<dbReference type="PANTHER" id="PTHR16631:SF13">
    <property type="entry name" value="GLUCAN ENDO-1,3-BETA-GLUCOSIDASE EGLC-RELATED"/>
    <property type="match status" value="1"/>
</dbReference>
<dbReference type="Pfam" id="PF00332">
    <property type="entry name" value="Glyco_hydro_17"/>
    <property type="match status" value="1"/>
</dbReference>
<dbReference type="SUPFAM" id="SSF51445">
    <property type="entry name" value="(Trans)glycosidases"/>
    <property type="match status" value="1"/>
</dbReference>
<feature type="signal peptide" evidence="3">
    <location>
        <begin position="1"/>
        <end position="18"/>
    </location>
</feature>
<feature type="chain" id="PRO_0000395142" description="Probable glucan endo-1,3-beta-glucosidase eglC">
    <location>
        <begin position="19"/>
        <end position="423"/>
    </location>
</feature>
<feature type="propeptide" id="PRO_0000395143" description="Removed in mature form" evidence="3">
    <location>
        <begin position="424"/>
        <end position="446"/>
    </location>
</feature>
<feature type="region of interest" description="Disordered" evidence="4">
    <location>
        <begin position="393"/>
        <end position="416"/>
    </location>
</feature>
<feature type="compositionally biased region" description="Low complexity" evidence="4">
    <location>
        <begin position="401"/>
        <end position="416"/>
    </location>
</feature>
<feature type="active site" description="Proton donor" evidence="2">
    <location>
        <position position="128"/>
    </location>
</feature>
<feature type="active site" description="Nucleophile" evidence="2">
    <location>
        <position position="239"/>
    </location>
</feature>
<feature type="lipid moiety-binding region" description="GPI-anchor amidated asparagine" evidence="3">
    <location>
        <position position="423"/>
    </location>
</feature>
<feature type="glycosylation site" description="N-linked (GlcNAc...) asparagine" evidence="3">
    <location>
        <position position="183"/>
    </location>
</feature>
<feature type="glycosylation site" description="N-linked (GlcNAc...) asparagine" evidence="3">
    <location>
        <position position="364"/>
    </location>
</feature>
<feature type="glycosylation site" description="N-linked (GlcNAc...) asparagine" evidence="3">
    <location>
        <position position="370"/>
    </location>
</feature>
<name>EGLC_ASPFU</name>
<keyword id="KW-0119">Carbohydrate metabolism</keyword>
<keyword id="KW-1003">Cell membrane</keyword>
<keyword id="KW-0134">Cell wall</keyword>
<keyword id="KW-0961">Cell wall biogenesis/degradation</keyword>
<keyword id="KW-0325">Glycoprotein</keyword>
<keyword id="KW-0336">GPI-anchor</keyword>
<keyword id="KW-0378">Hydrolase</keyword>
<keyword id="KW-0449">Lipoprotein</keyword>
<keyword id="KW-0472">Membrane</keyword>
<keyword id="KW-0624">Polysaccharide degradation</keyword>
<keyword id="KW-1185">Reference proteome</keyword>
<keyword id="KW-0964">Secreted</keyword>
<keyword id="KW-0732">Signal</keyword>
<sequence length="446" mass="44651">MQFTHLVALALALATSEAAHQGFNYGNTKSDGSAKSQADFQAEFSTAKNLVGTSGFTSARLYTMIQGGTANTPISAIPAAITEQTSLLLGLWASGGNFANEIAALKAAIAQYGDDLAKLVVGISVGSEDLYRNSVDGVKANAGIGTNPDEIVSYINEVRSTIAGTKLSGAPIGHVDTWTAWVNGSNSAVIDACDWLGFDGYPYFQNTMANSISDAKALFDESVAKTQAVAKGKEVWITETGWPVSGKTENLAVANLANAKTYWDEVGCPLFGKTNTWWYILQDADPVTPNPSFGIVGSTLSTTPLFDLSCSASSSSSAAAAASSTAGPSASSVIGGKASGFTTAAANSAKPTFTVGKGPGGSYNGTGFWNSTSSARPSSSAISGSSSGSAAGSSGAGASGASGQSSSSTGSSSAPSTSNILSNAASGLSGSIFGAVVAVCLALAAL</sequence>
<proteinExistence type="inferred from homology"/>
<organism>
    <name type="scientific">Aspergillus fumigatus (strain ATCC MYA-4609 / CBS 101355 / FGSC A1100 / Af293)</name>
    <name type="common">Neosartorya fumigata</name>
    <dbReference type="NCBI Taxonomy" id="330879"/>
    <lineage>
        <taxon>Eukaryota</taxon>
        <taxon>Fungi</taxon>
        <taxon>Dikarya</taxon>
        <taxon>Ascomycota</taxon>
        <taxon>Pezizomycotina</taxon>
        <taxon>Eurotiomycetes</taxon>
        <taxon>Eurotiomycetidae</taxon>
        <taxon>Eurotiales</taxon>
        <taxon>Aspergillaceae</taxon>
        <taxon>Aspergillus</taxon>
        <taxon>Aspergillus subgen. Fumigati</taxon>
    </lineage>
</organism>
<gene>
    <name type="primary">eglC</name>
    <name type="ORF">AFUA_3G00270</name>
</gene>
<protein>
    <recommendedName>
        <fullName>Probable glucan endo-1,3-beta-glucosidase eglC</fullName>
        <ecNumber>3.2.1.39</ecNumber>
    </recommendedName>
    <alternativeName>
        <fullName>Endo-1,3-beta-glucanase eglC</fullName>
    </alternativeName>
    <alternativeName>
        <fullName>Laminarinase eglC</fullName>
    </alternativeName>
</protein>